<dbReference type="EMBL" id="AY686640">
    <property type="protein sequence ID" value="AAT90845.1"/>
    <property type="molecule type" value="mRNA"/>
</dbReference>
<dbReference type="RefSeq" id="NP_001305348.1">
    <property type="nucleotide sequence ID" value="NM_001318419.2"/>
</dbReference>
<dbReference type="SMR" id="Q6B3N0"/>
<dbReference type="FunCoup" id="Q6B3N0">
    <property type="interactions" value="281"/>
</dbReference>
<dbReference type="STRING" id="9031.ENSGALP00000064050"/>
<dbReference type="PaxDb" id="9031-ENSGALP00000041319"/>
<dbReference type="Ensembl" id="ENSGALT00010004128.1">
    <property type="protein sequence ID" value="ENSGALP00010002425.1"/>
    <property type="gene ID" value="ENSGALG00010001813.1"/>
</dbReference>
<dbReference type="GeneID" id="100858404"/>
<dbReference type="KEGG" id="gga:100858404"/>
<dbReference type="CTD" id="3202"/>
<dbReference type="VEuPathDB" id="HostDB:geneid_100858404"/>
<dbReference type="eggNOG" id="KOG0489">
    <property type="taxonomic scope" value="Eukaryota"/>
</dbReference>
<dbReference type="GeneTree" id="ENSGT00940000159894"/>
<dbReference type="HOGENOM" id="CLU_061398_2_1_1"/>
<dbReference type="InParanoid" id="Q6B3N0"/>
<dbReference type="OMA" id="HNYGEHN"/>
<dbReference type="OrthoDB" id="6159439at2759"/>
<dbReference type="PhylomeDB" id="Q6B3N0"/>
<dbReference type="PRO" id="PR:Q6B3N0"/>
<dbReference type="Proteomes" id="UP000000539">
    <property type="component" value="Chromosome 2"/>
</dbReference>
<dbReference type="Bgee" id="ENSGALG00000025929">
    <property type="expression patterns" value="Expressed in lung and 9 other cell types or tissues"/>
</dbReference>
<dbReference type="GO" id="GO:0005634">
    <property type="term" value="C:nucleus"/>
    <property type="evidence" value="ECO:0000318"/>
    <property type="project" value="GO_Central"/>
</dbReference>
<dbReference type="GO" id="GO:0001228">
    <property type="term" value="F:DNA-binding transcription activator activity, RNA polymerase II-specific"/>
    <property type="evidence" value="ECO:0007669"/>
    <property type="project" value="Ensembl"/>
</dbReference>
<dbReference type="GO" id="GO:0000981">
    <property type="term" value="F:DNA-binding transcription factor activity, RNA polymerase II-specific"/>
    <property type="evidence" value="ECO:0000318"/>
    <property type="project" value="GO_Central"/>
</dbReference>
<dbReference type="GO" id="GO:0000978">
    <property type="term" value="F:RNA polymerase II cis-regulatory region sequence-specific DNA binding"/>
    <property type="evidence" value="ECO:0000318"/>
    <property type="project" value="GO_Central"/>
</dbReference>
<dbReference type="GO" id="GO:0009952">
    <property type="term" value="P:anterior/posterior pattern specification"/>
    <property type="evidence" value="ECO:0000318"/>
    <property type="project" value="GO_Central"/>
</dbReference>
<dbReference type="GO" id="GO:0060435">
    <property type="term" value="P:bronchiole development"/>
    <property type="evidence" value="ECO:0007669"/>
    <property type="project" value="Ensembl"/>
</dbReference>
<dbReference type="GO" id="GO:0016477">
    <property type="term" value="P:cell migration"/>
    <property type="evidence" value="ECO:0007669"/>
    <property type="project" value="Ensembl"/>
</dbReference>
<dbReference type="GO" id="GO:0048704">
    <property type="term" value="P:embryonic skeletal system morphogenesis"/>
    <property type="evidence" value="ECO:0007669"/>
    <property type="project" value="Ensembl"/>
</dbReference>
<dbReference type="GO" id="GO:0060441">
    <property type="term" value="P:epithelial tube branching involved in lung morphogenesis"/>
    <property type="evidence" value="ECO:0007669"/>
    <property type="project" value="Ensembl"/>
</dbReference>
<dbReference type="GO" id="GO:0060574">
    <property type="term" value="P:intestinal epithelial cell maturation"/>
    <property type="evidence" value="ECO:0007669"/>
    <property type="project" value="Ensembl"/>
</dbReference>
<dbReference type="GO" id="GO:0060480">
    <property type="term" value="P:lung goblet cell differentiation"/>
    <property type="evidence" value="ECO:0007669"/>
    <property type="project" value="Ensembl"/>
</dbReference>
<dbReference type="GO" id="GO:0060484">
    <property type="term" value="P:lung-associated mesenchyme development"/>
    <property type="evidence" value="ECO:0007669"/>
    <property type="project" value="Ensembl"/>
</dbReference>
<dbReference type="GO" id="GO:0060638">
    <property type="term" value="P:mesenchymal-epithelial cell signaling"/>
    <property type="evidence" value="ECO:0007669"/>
    <property type="project" value="Ensembl"/>
</dbReference>
<dbReference type="GO" id="GO:0035264">
    <property type="term" value="P:multicellular organism growth"/>
    <property type="evidence" value="ECO:0007669"/>
    <property type="project" value="Ensembl"/>
</dbReference>
<dbReference type="GO" id="GO:0016525">
    <property type="term" value="P:negative regulation of angiogenesis"/>
    <property type="evidence" value="ECO:0007669"/>
    <property type="project" value="Ensembl"/>
</dbReference>
<dbReference type="GO" id="GO:0045647">
    <property type="term" value="P:negative regulation of erythrocyte differentiation"/>
    <property type="evidence" value="ECO:0007669"/>
    <property type="project" value="Ensembl"/>
</dbReference>
<dbReference type="GO" id="GO:0043065">
    <property type="term" value="P:positive regulation of apoptotic process"/>
    <property type="evidence" value="ECO:0007669"/>
    <property type="project" value="Ensembl"/>
</dbReference>
<dbReference type="GO" id="GO:0010628">
    <property type="term" value="P:positive regulation of gene expression"/>
    <property type="evidence" value="ECO:0007669"/>
    <property type="project" value="Ensembl"/>
</dbReference>
<dbReference type="GO" id="GO:0045639">
    <property type="term" value="P:positive regulation of myeloid cell differentiation"/>
    <property type="evidence" value="ECO:0007669"/>
    <property type="project" value="Ensembl"/>
</dbReference>
<dbReference type="GO" id="GO:0033599">
    <property type="term" value="P:regulation of mammary gland epithelial cell proliferation"/>
    <property type="evidence" value="ECO:0007669"/>
    <property type="project" value="Ensembl"/>
</dbReference>
<dbReference type="GO" id="GO:0006357">
    <property type="term" value="P:regulation of transcription by RNA polymerase II"/>
    <property type="evidence" value="ECO:0000318"/>
    <property type="project" value="GO_Central"/>
</dbReference>
<dbReference type="GO" id="GO:0003016">
    <property type="term" value="P:respiratory system process"/>
    <property type="evidence" value="ECO:0007669"/>
    <property type="project" value="Ensembl"/>
</dbReference>
<dbReference type="GO" id="GO:0030878">
    <property type="term" value="P:thyroid gland development"/>
    <property type="evidence" value="ECO:0007669"/>
    <property type="project" value="Ensembl"/>
</dbReference>
<dbReference type="GO" id="GO:0060535">
    <property type="term" value="P:trachea cartilage morphogenesis"/>
    <property type="evidence" value="ECO:0007669"/>
    <property type="project" value="Ensembl"/>
</dbReference>
<dbReference type="CDD" id="cd00086">
    <property type="entry name" value="homeodomain"/>
    <property type="match status" value="1"/>
</dbReference>
<dbReference type="FunFam" id="1.10.10.60:FF:000055">
    <property type="entry name" value="Homeobox protein Hox-A5"/>
    <property type="match status" value="1"/>
</dbReference>
<dbReference type="Gene3D" id="1.10.10.60">
    <property type="entry name" value="Homeodomain-like"/>
    <property type="match status" value="1"/>
</dbReference>
<dbReference type="InterPro" id="IPR050296">
    <property type="entry name" value="Antp_homeobox"/>
</dbReference>
<dbReference type="InterPro" id="IPR001356">
    <property type="entry name" value="HD"/>
</dbReference>
<dbReference type="InterPro" id="IPR020479">
    <property type="entry name" value="HD_metazoa"/>
</dbReference>
<dbReference type="InterPro" id="IPR017995">
    <property type="entry name" value="Homeobox_antennapedia"/>
</dbReference>
<dbReference type="InterPro" id="IPR001827">
    <property type="entry name" value="Homeobox_Antennapedia_CS"/>
</dbReference>
<dbReference type="InterPro" id="IPR017970">
    <property type="entry name" value="Homeobox_CS"/>
</dbReference>
<dbReference type="InterPro" id="IPR009057">
    <property type="entry name" value="Homeodomain-like_sf"/>
</dbReference>
<dbReference type="PANTHER" id="PTHR45659">
    <property type="entry name" value="HOMEOBOX PROTEIN HOX"/>
    <property type="match status" value="1"/>
</dbReference>
<dbReference type="PANTHER" id="PTHR45659:SF10">
    <property type="entry name" value="HOMEOBOX PROTEIN HOX-A5"/>
    <property type="match status" value="1"/>
</dbReference>
<dbReference type="Pfam" id="PF00046">
    <property type="entry name" value="Homeodomain"/>
    <property type="match status" value="1"/>
</dbReference>
<dbReference type="PRINTS" id="PR00025">
    <property type="entry name" value="ANTENNAPEDIA"/>
</dbReference>
<dbReference type="PRINTS" id="PR00024">
    <property type="entry name" value="HOMEOBOX"/>
</dbReference>
<dbReference type="SMART" id="SM00389">
    <property type="entry name" value="HOX"/>
    <property type="match status" value="1"/>
</dbReference>
<dbReference type="SUPFAM" id="SSF46689">
    <property type="entry name" value="Homeodomain-like"/>
    <property type="match status" value="1"/>
</dbReference>
<dbReference type="PROSITE" id="PS00032">
    <property type="entry name" value="ANTENNAPEDIA"/>
    <property type="match status" value="1"/>
</dbReference>
<dbReference type="PROSITE" id="PS00027">
    <property type="entry name" value="HOMEOBOX_1"/>
    <property type="match status" value="1"/>
</dbReference>
<dbReference type="PROSITE" id="PS50071">
    <property type="entry name" value="HOMEOBOX_2"/>
    <property type="match status" value="1"/>
</dbReference>
<sequence>MSSYFVNSFCGRYPNGPDYQLHNYGDHSSVSEQYRDSASMHSGRYGYGYNGMDLSVGRSASTHFGASERARTYPANSTSASTEPRYSQSAAASHSPPPDPLPCTAVAASPVSESHHGVKNSLGNSSSTSSNSSSSTHISRDGVGTSSGTEEDTPASSEQASAPSDQSTAQPSQPQIYPWMRKLHISHDNIGGPEGKRARTAYTRYQTLELEKEFHFNRYLTRRRRIEIAHALCLSERQIKIWFQNRRMKWKKDNKLKSMSMAAAGGAFRP</sequence>
<organism>
    <name type="scientific">Gallus gallus</name>
    <name type="common">Chicken</name>
    <dbReference type="NCBI Taxonomy" id="9031"/>
    <lineage>
        <taxon>Eukaryota</taxon>
        <taxon>Metazoa</taxon>
        <taxon>Chordata</taxon>
        <taxon>Craniata</taxon>
        <taxon>Vertebrata</taxon>
        <taxon>Euteleostomi</taxon>
        <taxon>Archelosauria</taxon>
        <taxon>Archosauria</taxon>
        <taxon>Dinosauria</taxon>
        <taxon>Saurischia</taxon>
        <taxon>Theropoda</taxon>
        <taxon>Coelurosauria</taxon>
        <taxon>Aves</taxon>
        <taxon>Neognathae</taxon>
        <taxon>Galloanserae</taxon>
        <taxon>Galliformes</taxon>
        <taxon>Phasianidae</taxon>
        <taxon>Phasianinae</taxon>
        <taxon>Gallus</taxon>
    </lineage>
</organism>
<accession>Q6B3N0</accession>
<reference key="1">
    <citation type="submission" date="2004-07" db="EMBL/GenBank/DDBJ databases">
        <title>Expression and regulation of HOXA5, HOXA6 and HOXA7 during chick wing development.</title>
        <authorList>
            <person name="Oberg K.C."/>
            <person name="Pira C.U."/>
            <person name="Creamer D.H."/>
            <person name="Revelli J.-P."/>
            <person name="Eichele G."/>
        </authorList>
    </citation>
    <scope>NUCLEOTIDE SEQUENCE [MRNA]</scope>
</reference>
<gene>
    <name type="primary">HOXA5</name>
</gene>
<comment type="function">
    <text evidence="1">Sequence-specific transcription factor which is part of a developmental regulatory system that provides cells with specific positional identities on the anterior-posterior axis. Also binds to its own promoter. Binds specifically to the motif 5'-CYYNATTA[TG]Y-3' (By similarity).</text>
</comment>
<comment type="subcellular location">
    <subcellularLocation>
        <location evidence="2">Nucleus</location>
    </subcellularLocation>
</comment>
<comment type="similarity">
    <text evidence="4">Belongs to the Antp homeobox family.</text>
</comment>
<proteinExistence type="evidence at transcript level"/>
<evidence type="ECO:0000250" key="1"/>
<evidence type="ECO:0000255" key="2">
    <source>
        <dbReference type="PROSITE-ProRule" id="PRU00108"/>
    </source>
</evidence>
<evidence type="ECO:0000256" key="3">
    <source>
        <dbReference type="SAM" id="MobiDB-lite"/>
    </source>
</evidence>
<evidence type="ECO:0000305" key="4"/>
<name>HXA5_CHICK</name>
<protein>
    <recommendedName>
        <fullName>Homeobox protein Hox-A5</fullName>
    </recommendedName>
</protein>
<keyword id="KW-0217">Developmental protein</keyword>
<keyword id="KW-0238">DNA-binding</keyword>
<keyword id="KW-0371">Homeobox</keyword>
<keyword id="KW-0539">Nucleus</keyword>
<keyword id="KW-1185">Reference proteome</keyword>
<keyword id="KW-0804">Transcription</keyword>
<keyword id="KW-0805">Transcription regulation</keyword>
<feature type="chain" id="PRO_0000200061" description="Homeobox protein Hox-A5">
    <location>
        <begin position="1"/>
        <end position="270"/>
    </location>
</feature>
<feature type="DNA-binding region" description="Homeobox" evidence="2">
    <location>
        <begin position="195"/>
        <end position="254"/>
    </location>
</feature>
<feature type="region of interest" description="Disordered" evidence="3">
    <location>
        <begin position="67"/>
        <end position="173"/>
    </location>
</feature>
<feature type="short sequence motif" description="Antp-type hexapeptide">
    <location>
        <begin position="176"/>
        <end position="181"/>
    </location>
</feature>
<feature type="compositionally biased region" description="Polar residues" evidence="3">
    <location>
        <begin position="74"/>
        <end position="88"/>
    </location>
</feature>
<feature type="compositionally biased region" description="Low complexity" evidence="3">
    <location>
        <begin position="124"/>
        <end position="136"/>
    </location>
</feature>
<feature type="compositionally biased region" description="Polar residues" evidence="3">
    <location>
        <begin position="144"/>
        <end position="173"/>
    </location>
</feature>